<keyword id="KW-0325">Glycoprotein</keyword>
<keyword id="KW-0472">Membrane</keyword>
<keyword id="KW-1185">Reference proteome</keyword>
<keyword id="KW-0812">Transmembrane</keyword>
<keyword id="KW-1133">Transmembrane helix</keyword>
<keyword id="KW-0813">Transport</keyword>
<dbReference type="EMBL" id="BA000050">
    <property type="protein sequence ID" value="BAE56594.1"/>
    <property type="molecule type" value="Genomic_DNA"/>
</dbReference>
<dbReference type="RefSeq" id="XP_001818596.1">
    <property type="nucleotide sequence ID" value="XM_001818544.1"/>
</dbReference>
<dbReference type="SMR" id="Q2UPC1"/>
<dbReference type="STRING" id="510516.Q2UPC1"/>
<dbReference type="GlyCosmos" id="Q2UPC1">
    <property type="glycosylation" value="1 site, No reported glycans"/>
</dbReference>
<dbReference type="EnsemblFungi" id="BAE56594">
    <property type="protein sequence ID" value="BAE56594"/>
    <property type="gene ID" value="AO090001000031"/>
</dbReference>
<dbReference type="GeneID" id="5990567"/>
<dbReference type="KEGG" id="aor:AO090001000031"/>
<dbReference type="VEuPathDB" id="FungiDB:AO090001000031"/>
<dbReference type="HOGENOM" id="CLU_000960_22_0_1"/>
<dbReference type="OMA" id="NYVWIAN"/>
<dbReference type="OrthoDB" id="124578at5052"/>
<dbReference type="Proteomes" id="UP000006564">
    <property type="component" value="Chromosome 2"/>
</dbReference>
<dbReference type="GO" id="GO:0005886">
    <property type="term" value="C:plasma membrane"/>
    <property type="evidence" value="ECO:0007669"/>
    <property type="project" value="TreeGrafter"/>
</dbReference>
<dbReference type="GO" id="GO:0022857">
    <property type="term" value="F:transmembrane transporter activity"/>
    <property type="evidence" value="ECO:0007669"/>
    <property type="project" value="InterPro"/>
</dbReference>
<dbReference type="Gene3D" id="1.20.1250.20">
    <property type="entry name" value="MFS general substrate transporter like domains"/>
    <property type="match status" value="1"/>
</dbReference>
<dbReference type="Gene3D" id="1.20.1720.10">
    <property type="entry name" value="Multidrug resistance protein D"/>
    <property type="match status" value="1"/>
</dbReference>
<dbReference type="InterPro" id="IPR011701">
    <property type="entry name" value="MFS"/>
</dbReference>
<dbReference type="InterPro" id="IPR020846">
    <property type="entry name" value="MFS_dom"/>
</dbReference>
<dbReference type="InterPro" id="IPR036259">
    <property type="entry name" value="MFS_trans_sf"/>
</dbReference>
<dbReference type="PANTHER" id="PTHR23501">
    <property type="entry name" value="MAJOR FACILITATOR SUPERFAMILY"/>
    <property type="match status" value="1"/>
</dbReference>
<dbReference type="PANTHER" id="PTHR23501:SF187">
    <property type="entry name" value="MAJOR FACILITATOR SUPERFAMILY (MFS) PROFILE DOMAIN-CONTAINING PROTEIN"/>
    <property type="match status" value="1"/>
</dbReference>
<dbReference type="Pfam" id="PF07690">
    <property type="entry name" value="MFS_1"/>
    <property type="match status" value="1"/>
</dbReference>
<dbReference type="PRINTS" id="PR01036">
    <property type="entry name" value="TCRTETB"/>
</dbReference>
<dbReference type="SUPFAM" id="SSF103473">
    <property type="entry name" value="MFS general substrate transporter"/>
    <property type="match status" value="1"/>
</dbReference>
<dbReference type="PROSITE" id="PS50850">
    <property type="entry name" value="MFS"/>
    <property type="match status" value="1"/>
</dbReference>
<evidence type="ECO:0000255" key="1"/>
<evidence type="ECO:0000255" key="2">
    <source>
        <dbReference type="PROSITE-ProRule" id="PRU00498"/>
    </source>
</evidence>
<evidence type="ECO:0000303" key="3">
    <source>
    </source>
</evidence>
<evidence type="ECO:0000305" key="4"/>
<evidence type="ECO:0000305" key="5">
    <source>
    </source>
</evidence>
<accession>Q2UPC1</accession>
<protein>
    <recommendedName>
        <fullName evidence="3">MFS efflux transporter aclA</fullName>
    </recommendedName>
    <alternativeName>
        <fullName evidence="3">Aspirochlorine biosynthesis protein A</fullName>
    </alternativeName>
</protein>
<comment type="function">
    <text evidence="5">MFS efflux transporter; part of the gene cluster that mediates the biosynthesis of aspirochlorine (or antibiotic A30641), an unusual halogenated spiro compound with distinctive antifungal properties due to selective inhibition of protein biosynthesis, and which is also active against bacteria, viruses, and murine tumor cells (PubMed:25302411).</text>
</comment>
<comment type="subcellular location">
    <subcellularLocation>
        <location evidence="1">Membrane</location>
        <topology evidence="1">Multi-pass membrane protein</topology>
    </subcellularLocation>
</comment>
<comment type="similarity">
    <text evidence="4">Belongs to the major facilitator superfamily.</text>
</comment>
<gene>
    <name evidence="3" type="primary">aclA</name>
    <name type="ORF">AO090001000031</name>
</gene>
<proteinExistence type="inferred from homology"/>
<reference key="1">
    <citation type="journal article" date="2005" name="Nature">
        <title>Genome sequencing and analysis of Aspergillus oryzae.</title>
        <authorList>
            <person name="Machida M."/>
            <person name="Asai K."/>
            <person name="Sano M."/>
            <person name="Tanaka T."/>
            <person name="Kumagai T."/>
            <person name="Terai G."/>
            <person name="Kusumoto K."/>
            <person name="Arima T."/>
            <person name="Akita O."/>
            <person name="Kashiwagi Y."/>
            <person name="Abe K."/>
            <person name="Gomi K."/>
            <person name="Horiuchi H."/>
            <person name="Kitamoto K."/>
            <person name="Kobayashi T."/>
            <person name="Takeuchi M."/>
            <person name="Denning D.W."/>
            <person name="Galagan J.E."/>
            <person name="Nierman W.C."/>
            <person name="Yu J."/>
            <person name="Archer D.B."/>
            <person name="Bennett J.W."/>
            <person name="Bhatnagar D."/>
            <person name="Cleveland T.E."/>
            <person name="Fedorova N.D."/>
            <person name="Gotoh O."/>
            <person name="Horikawa H."/>
            <person name="Hosoyama A."/>
            <person name="Ichinomiya M."/>
            <person name="Igarashi R."/>
            <person name="Iwashita K."/>
            <person name="Juvvadi P.R."/>
            <person name="Kato M."/>
            <person name="Kato Y."/>
            <person name="Kin T."/>
            <person name="Kokubun A."/>
            <person name="Maeda H."/>
            <person name="Maeyama N."/>
            <person name="Maruyama J."/>
            <person name="Nagasaki H."/>
            <person name="Nakajima T."/>
            <person name="Oda K."/>
            <person name="Okada K."/>
            <person name="Paulsen I."/>
            <person name="Sakamoto K."/>
            <person name="Sawano T."/>
            <person name="Takahashi M."/>
            <person name="Takase K."/>
            <person name="Terabayashi Y."/>
            <person name="Wortman J.R."/>
            <person name="Yamada O."/>
            <person name="Yamagata Y."/>
            <person name="Anazawa H."/>
            <person name="Hata Y."/>
            <person name="Koide Y."/>
            <person name="Komori T."/>
            <person name="Koyama Y."/>
            <person name="Minetoki T."/>
            <person name="Suharnan S."/>
            <person name="Tanaka A."/>
            <person name="Isono K."/>
            <person name="Kuhara S."/>
            <person name="Ogasawara N."/>
            <person name="Kikuchi H."/>
        </authorList>
    </citation>
    <scope>NUCLEOTIDE SEQUENCE [LARGE SCALE GENOMIC DNA]</scope>
    <source>
        <strain>ATCC 42149 / RIB 40</strain>
    </source>
</reference>
<reference key="2">
    <citation type="journal article" date="2014" name="Angew. Chem. Int. Ed.">
        <title>Biosynthesis of the halogenated mycotoxin aspirochlorine in koji mold involves a cryptic amino acid conversion.</title>
        <authorList>
            <person name="Chankhamjon P."/>
            <person name="Boettger-Schmidt D."/>
            <person name="Scherlach K."/>
            <person name="Urbansky B."/>
            <person name="Lackner G."/>
            <person name="Kalb D."/>
            <person name="Dahse H.M."/>
            <person name="Hoffmeister D."/>
            <person name="Hertweck C."/>
        </authorList>
    </citation>
    <scope>FUNCTION</scope>
</reference>
<sequence length="551" mass="59081">MDQPSPSAEDSQPERQSTGTRGTRFWAVFVSLCFASFVASLDITAITTALPTVTRELDGGENYVWIANSYTLASAVVQPLIGQISNIVGRRNPMIILMCLFALGSGICGGATSTGMMIAGRTVQGLGAGGILLLLEVIVCDLVPLRERAQYVGIALSTCALGISLGPLVGGALVQHATWRWVFYINLPCAGVALVALVLCLNVQHKREVSWGRALARVDWVGNTIFIAAICAIMYALVIGGSVHPWSSYQVLVPLVLGAFGWVLFHIFEASPYCLEPTMPPRLFRNRTSMTAYVLAFLAAMLMQWVVYFLTLFFQTVKGQSTTMSGVDVIPFTGFMIPSAIVGGAIMSKTGVYRPLHWAGFALLSICMGVFSTWDAGTPRAEWVILQCLVGLGHGLLLTSVLPAIQAALPESDNAAATSAYAFLRSFGFVWGVEIPAVVFNGQVDRFISRVHDATVRNKLAHGGAYSLAGTSFLSQLGDEADAVRSTYTDSLRTVWQVGMAFALLGFALVVVEKHIELRTTLETDFGLEGSENRAATSVEGVETGPVSKAQ</sequence>
<name>ACLA_ASPOR</name>
<organism>
    <name type="scientific">Aspergillus oryzae (strain ATCC 42149 / RIB 40)</name>
    <name type="common">Yellow koji mold</name>
    <dbReference type="NCBI Taxonomy" id="510516"/>
    <lineage>
        <taxon>Eukaryota</taxon>
        <taxon>Fungi</taxon>
        <taxon>Dikarya</taxon>
        <taxon>Ascomycota</taxon>
        <taxon>Pezizomycotina</taxon>
        <taxon>Eurotiomycetes</taxon>
        <taxon>Eurotiomycetidae</taxon>
        <taxon>Eurotiales</taxon>
        <taxon>Aspergillaceae</taxon>
        <taxon>Aspergillus</taxon>
        <taxon>Aspergillus subgen. Circumdati</taxon>
    </lineage>
</organism>
<feature type="chain" id="PRO_0000441207" description="MFS efflux transporter aclA">
    <location>
        <begin position="1"/>
        <end position="551"/>
    </location>
</feature>
<feature type="transmembrane region" description="Helical" evidence="1">
    <location>
        <begin position="26"/>
        <end position="46"/>
    </location>
</feature>
<feature type="transmembrane region" description="Helical" evidence="1">
    <location>
        <begin position="64"/>
        <end position="84"/>
    </location>
</feature>
<feature type="transmembrane region" description="Helical" evidence="1">
    <location>
        <begin position="93"/>
        <end position="113"/>
    </location>
</feature>
<feature type="transmembrane region" description="Helical" evidence="1">
    <location>
        <begin position="125"/>
        <end position="145"/>
    </location>
</feature>
<feature type="transmembrane region" description="Helical" evidence="1">
    <location>
        <begin position="154"/>
        <end position="174"/>
    </location>
</feature>
<feature type="transmembrane region" description="Helical" evidence="1">
    <location>
        <begin position="181"/>
        <end position="201"/>
    </location>
</feature>
<feature type="transmembrane region" description="Helical" evidence="1">
    <location>
        <begin position="220"/>
        <end position="240"/>
    </location>
</feature>
<feature type="transmembrane region" description="Helical" evidence="1">
    <location>
        <begin position="251"/>
        <end position="271"/>
    </location>
</feature>
<feature type="transmembrane region" description="Helical" evidence="1">
    <location>
        <begin position="294"/>
        <end position="314"/>
    </location>
</feature>
<feature type="transmembrane region" description="Helical" evidence="1">
    <location>
        <begin position="327"/>
        <end position="347"/>
    </location>
</feature>
<feature type="transmembrane region" description="Helical" evidence="1">
    <location>
        <begin position="356"/>
        <end position="376"/>
    </location>
</feature>
<feature type="transmembrane region" description="Helical" evidence="1">
    <location>
        <begin position="385"/>
        <end position="405"/>
    </location>
</feature>
<feature type="transmembrane region" description="Helical" evidence="1">
    <location>
        <begin position="420"/>
        <end position="440"/>
    </location>
</feature>
<feature type="transmembrane region" description="Helical" evidence="1">
    <location>
        <begin position="492"/>
        <end position="512"/>
    </location>
</feature>
<feature type="glycosylation site" description="N-linked (GlcNAc...) asparagine" evidence="2">
    <location>
        <position position="286"/>
    </location>
</feature>